<sequence>MTKVKICGLSTEEAVETAVSAGADYIGFVFAPSKRQVTLEEAAELAKLIPSDVKKVGVFVSPSRVELLEAIDKVGLDLVQVHGQVADDLFENLPCASIQAVQVDGNGHVPNSQADYLLFDAPVAGSGQPFDWGQLDTTGLAQPFFIAGGLNEDNVVKAIQHFTPYAVDVSSGVETDGQKDHEKIRRFIERVKHGISGTK</sequence>
<name>TRPF_STRPI</name>
<reference key="1">
    <citation type="journal article" date="2010" name="Genome Biol.">
        <title>Structure and dynamics of the pan-genome of Streptococcus pneumoniae and closely related species.</title>
        <authorList>
            <person name="Donati C."/>
            <person name="Hiller N.L."/>
            <person name="Tettelin H."/>
            <person name="Muzzi A."/>
            <person name="Croucher N.J."/>
            <person name="Angiuoli S.V."/>
            <person name="Oggioni M."/>
            <person name="Dunning Hotopp J.C."/>
            <person name="Hu F.Z."/>
            <person name="Riley D.R."/>
            <person name="Covacci A."/>
            <person name="Mitchell T.J."/>
            <person name="Bentley S.D."/>
            <person name="Kilian M."/>
            <person name="Ehrlich G.D."/>
            <person name="Rappuoli R."/>
            <person name="Moxon E.R."/>
            <person name="Masignani V."/>
        </authorList>
    </citation>
    <scope>NUCLEOTIDE SEQUENCE [LARGE SCALE GENOMIC DNA]</scope>
    <source>
        <strain>Hungary19A-6</strain>
    </source>
</reference>
<keyword id="KW-0028">Amino-acid biosynthesis</keyword>
<keyword id="KW-0057">Aromatic amino acid biosynthesis</keyword>
<keyword id="KW-0413">Isomerase</keyword>
<keyword id="KW-0822">Tryptophan biosynthesis</keyword>
<feature type="chain" id="PRO_1000095943" description="N-(5'-phosphoribosyl)anthranilate isomerase">
    <location>
        <begin position="1"/>
        <end position="199"/>
    </location>
</feature>
<gene>
    <name evidence="1" type="primary">trpF</name>
    <name type="ordered locus">SPH_1935</name>
</gene>
<comment type="catalytic activity">
    <reaction evidence="1">
        <text>N-(5-phospho-beta-D-ribosyl)anthranilate = 1-(2-carboxyphenylamino)-1-deoxy-D-ribulose 5-phosphate</text>
        <dbReference type="Rhea" id="RHEA:21540"/>
        <dbReference type="ChEBI" id="CHEBI:18277"/>
        <dbReference type="ChEBI" id="CHEBI:58613"/>
        <dbReference type="EC" id="5.3.1.24"/>
    </reaction>
</comment>
<comment type="pathway">
    <text evidence="1">Amino-acid biosynthesis; L-tryptophan biosynthesis; L-tryptophan from chorismate: step 3/5.</text>
</comment>
<comment type="similarity">
    <text evidence="1">Belongs to the TrpF family.</text>
</comment>
<organism>
    <name type="scientific">Streptococcus pneumoniae (strain Hungary19A-6)</name>
    <dbReference type="NCBI Taxonomy" id="487214"/>
    <lineage>
        <taxon>Bacteria</taxon>
        <taxon>Bacillati</taxon>
        <taxon>Bacillota</taxon>
        <taxon>Bacilli</taxon>
        <taxon>Lactobacillales</taxon>
        <taxon>Streptococcaceae</taxon>
        <taxon>Streptococcus</taxon>
    </lineage>
</organism>
<evidence type="ECO:0000255" key="1">
    <source>
        <dbReference type="HAMAP-Rule" id="MF_00135"/>
    </source>
</evidence>
<protein>
    <recommendedName>
        <fullName evidence="1">N-(5'-phosphoribosyl)anthranilate isomerase</fullName>
        <shortName evidence="1">PRAI</shortName>
        <ecNumber evidence="1">5.3.1.24</ecNumber>
    </recommendedName>
</protein>
<proteinExistence type="inferred from homology"/>
<accession>B1I7S8</accession>
<dbReference type="EC" id="5.3.1.24" evidence="1"/>
<dbReference type="EMBL" id="CP000936">
    <property type="protein sequence ID" value="ACA37622.1"/>
    <property type="molecule type" value="Genomic_DNA"/>
</dbReference>
<dbReference type="RefSeq" id="WP_000169872.1">
    <property type="nucleotide sequence ID" value="NC_010380.1"/>
</dbReference>
<dbReference type="SMR" id="B1I7S8"/>
<dbReference type="KEGG" id="spv:SPH_1935"/>
<dbReference type="HOGENOM" id="CLU_076364_1_0_9"/>
<dbReference type="UniPathway" id="UPA00035">
    <property type="reaction ID" value="UER00042"/>
</dbReference>
<dbReference type="Proteomes" id="UP000002163">
    <property type="component" value="Chromosome"/>
</dbReference>
<dbReference type="GO" id="GO:0004640">
    <property type="term" value="F:phosphoribosylanthranilate isomerase activity"/>
    <property type="evidence" value="ECO:0007669"/>
    <property type="project" value="UniProtKB-UniRule"/>
</dbReference>
<dbReference type="GO" id="GO:0000162">
    <property type="term" value="P:L-tryptophan biosynthetic process"/>
    <property type="evidence" value="ECO:0007669"/>
    <property type="project" value="UniProtKB-UniRule"/>
</dbReference>
<dbReference type="CDD" id="cd00405">
    <property type="entry name" value="PRAI"/>
    <property type="match status" value="1"/>
</dbReference>
<dbReference type="FunFam" id="3.20.20.70:FF:000075">
    <property type="entry name" value="Tryptophan biosynthesis protein TRP1"/>
    <property type="match status" value="1"/>
</dbReference>
<dbReference type="Gene3D" id="3.20.20.70">
    <property type="entry name" value="Aldolase class I"/>
    <property type="match status" value="1"/>
</dbReference>
<dbReference type="HAMAP" id="MF_00135">
    <property type="entry name" value="PRAI"/>
    <property type="match status" value="1"/>
</dbReference>
<dbReference type="InterPro" id="IPR013785">
    <property type="entry name" value="Aldolase_TIM"/>
</dbReference>
<dbReference type="InterPro" id="IPR001240">
    <property type="entry name" value="PRAI_dom"/>
</dbReference>
<dbReference type="InterPro" id="IPR011060">
    <property type="entry name" value="RibuloseP-bd_barrel"/>
</dbReference>
<dbReference type="InterPro" id="IPR044643">
    <property type="entry name" value="TrpF_fam"/>
</dbReference>
<dbReference type="NCBIfam" id="NF002300">
    <property type="entry name" value="PRK01222.1-7"/>
    <property type="match status" value="1"/>
</dbReference>
<dbReference type="PANTHER" id="PTHR42894">
    <property type="entry name" value="N-(5'-PHOSPHORIBOSYL)ANTHRANILATE ISOMERASE"/>
    <property type="match status" value="1"/>
</dbReference>
<dbReference type="PANTHER" id="PTHR42894:SF1">
    <property type="entry name" value="N-(5'-PHOSPHORIBOSYL)ANTHRANILATE ISOMERASE"/>
    <property type="match status" value="1"/>
</dbReference>
<dbReference type="Pfam" id="PF00697">
    <property type="entry name" value="PRAI"/>
    <property type="match status" value="1"/>
</dbReference>
<dbReference type="SUPFAM" id="SSF51366">
    <property type="entry name" value="Ribulose-phoshate binding barrel"/>
    <property type="match status" value="1"/>
</dbReference>